<evidence type="ECO:0000255" key="1">
    <source>
        <dbReference type="HAMAP-Rule" id="MF_00984"/>
    </source>
</evidence>
<evidence type="ECO:0000256" key="2">
    <source>
        <dbReference type="SAM" id="MobiDB-lite"/>
    </source>
</evidence>
<feature type="chain" id="PRO_0000096121" description="Single-stranded DNA-binding protein 2">
    <location>
        <begin position="1"/>
        <end position="163"/>
    </location>
</feature>
<feature type="domain" description="SSB" evidence="1">
    <location>
        <begin position="1"/>
        <end position="104"/>
    </location>
</feature>
<feature type="region of interest" description="Disordered" evidence="2">
    <location>
        <begin position="109"/>
        <end position="163"/>
    </location>
</feature>
<feature type="short sequence motif" description="Important for interaction with partner proteins" evidence="1">
    <location>
        <begin position="158"/>
        <end position="163"/>
    </location>
</feature>
<feature type="compositionally biased region" description="Low complexity" evidence="2">
    <location>
        <begin position="119"/>
        <end position="130"/>
    </location>
</feature>
<feature type="compositionally biased region" description="Polar residues" evidence="2">
    <location>
        <begin position="131"/>
        <end position="140"/>
    </location>
</feature>
<gene>
    <name type="primary">ssb2</name>
    <name type="ordered locus">M6_Spy1566</name>
</gene>
<reference key="1">
    <citation type="journal article" date="2004" name="J. Infect. Dis.">
        <title>Progress toward characterization of the group A Streptococcus metagenome: complete genome sequence of a macrolide-resistant serotype M6 strain.</title>
        <authorList>
            <person name="Banks D.J."/>
            <person name="Porcella S.F."/>
            <person name="Barbian K.D."/>
            <person name="Beres S.B."/>
            <person name="Philips L.E."/>
            <person name="Voyich J.M."/>
            <person name="DeLeo F.R."/>
            <person name="Martin J.M."/>
            <person name="Somerville G.A."/>
            <person name="Musser J.M."/>
        </authorList>
    </citation>
    <scope>NUCLEOTIDE SEQUENCE [LARGE SCALE GENOMIC DNA]</scope>
    <source>
        <strain>ATCC BAA-946 / MGAS10394</strain>
    </source>
</reference>
<sequence length="163" mass="17982">MINNVVLVGRMTKDAELRYTPSQVAVATFTLAVNRTFKSQNGEREADFINCVIWRQPAENLANWAKKGALIGVTGRIQTRNYENQQGQRVYVTEVVADNFQMLESRATREGGSTGSFNGGFNNNTSSSNSYSAPAQQTPNFGRDDSPFGNSNPMDISDDDLPF</sequence>
<dbReference type="EMBL" id="CP000003">
    <property type="protein sequence ID" value="AAT87701.1"/>
    <property type="molecule type" value="Genomic_DNA"/>
</dbReference>
<dbReference type="RefSeq" id="WP_002983122.1">
    <property type="nucleotide sequence ID" value="NC_006086.1"/>
</dbReference>
<dbReference type="SMR" id="Q5XA62"/>
<dbReference type="KEGG" id="spa:M6_Spy1566"/>
<dbReference type="HOGENOM" id="CLU_078758_6_2_9"/>
<dbReference type="Proteomes" id="UP000001167">
    <property type="component" value="Chromosome"/>
</dbReference>
<dbReference type="GO" id="GO:0009295">
    <property type="term" value="C:nucleoid"/>
    <property type="evidence" value="ECO:0007669"/>
    <property type="project" value="TreeGrafter"/>
</dbReference>
<dbReference type="GO" id="GO:0003697">
    <property type="term" value="F:single-stranded DNA binding"/>
    <property type="evidence" value="ECO:0007669"/>
    <property type="project" value="UniProtKB-UniRule"/>
</dbReference>
<dbReference type="GO" id="GO:0006310">
    <property type="term" value="P:DNA recombination"/>
    <property type="evidence" value="ECO:0007669"/>
    <property type="project" value="UniProtKB-UniRule"/>
</dbReference>
<dbReference type="GO" id="GO:0006281">
    <property type="term" value="P:DNA repair"/>
    <property type="evidence" value="ECO:0007669"/>
    <property type="project" value="UniProtKB-UniRule"/>
</dbReference>
<dbReference type="GO" id="GO:0006260">
    <property type="term" value="P:DNA replication"/>
    <property type="evidence" value="ECO:0007669"/>
    <property type="project" value="UniProtKB-UniRule"/>
</dbReference>
<dbReference type="CDD" id="cd04496">
    <property type="entry name" value="SSB_OBF"/>
    <property type="match status" value="1"/>
</dbReference>
<dbReference type="FunFam" id="2.40.50.140:FF:000084">
    <property type="entry name" value="Single-stranded DNA-binding protein"/>
    <property type="match status" value="1"/>
</dbReference>
<dbReference type="Gene3D" id="2.40.50.140">
    <property type="entry name" value="Nucleic acid-binding proteins"/>
    <property type="match status" value="1"/>
</dbReference>
<dbReference type="HAMAP" id="MF_00984">
    <property type="entry name" value="SSB"/>
    <property type="match status" value="1"/>
</dbReference>
<dbReference type="InterPro" id="IPR012340">
    <property type="entry name" value="NA-bd_OB-fold"/>
</dbReference>
<dbReference type="InterPro" id="IPR000424">
    <property type="entry name" value="Primosome_PriB/ssb"/>
</dbReference>
<dbReference type="InterPro" id="IPR011344">
    <property type="entry name" value="ssDNA-bd"/>
</dbReference>
<dbReference type="NCBIfam" id="NF005580">
    <property type="entry name" value="PRK07275.1"/>
    <property type="match status" value="1"/>
</dbReference>
<dbReference type="NCBIfam" id="TIGR00621">
    <property type="entry name" value="ssb"/>
    <property type="match status" value="1"/>
</dbReference>
<dbReference type="PANTHER" id="PTHR10302">
    <property type="entry name" value="SINGLE-STRANDED DNA-BINDING PROTEIN"/>
    <property type="match status" value="1"/>
</dbReference>
<dbReference type="PANTHER" id="PTHR10302:SF27">
    <property type="entry name" value="SINGLE-STRANDED DNA-BINDING PROTEIN"/>
    <property type="match status" value="1"/>
</dbReference>
<dbReference type="Pfam" id="PF00436">
    <property type="entry name" value="SSB"/>
    <property type="match status" value="1"/>
</dbReference>
<dbReference type="PIRSF" id="PIRSF002070">
    <property type="entry name" value="SSB"/>
    <property type="match status" value="1"/>
</dbReference>
<dbReference type="SUPFAM" id="SSF50249">
    <property type="entry name" value="Nucleic acid-binding proteins"/>
    <property type="match status" value="1"/>
</dbReference>
<dbReference type="PROSITE" id="PS50935">
    <property type="entry name" value="SSB"/>
    <property type="match status" value="1"/>
</dbReference>
<keyword id="KW-0227">DNA damage</keyword>
<keyword id="KW-0233">DNA recombination</keyword>
<keyword id="KW-0234">DNA repair</keyword>
<keyword id="KW-0235">DNA replication</keyword>
<keyword id="KW-0238">DNA-binding</keyword>
<accession>Q5XA62</accession>
<organism>
    <name type="scientific">Streptococcus pyogenes serotype M6 (strain ATCC BAA-946 / MGAS10394)</name>
    <dbReference type="NCBI Taxonomy" id="286636"/>
    <lineage>
        <taxon>Bacteria</taxon>
        <taxon>Bacillati</taxon>
        <taxon>Bacillota</taxon>
        <taxon>Bacilli</taxon>
        <taxon>Lactobacillales</taxon>
        <taxon>Streptococcaceae</taxon>
        <taxon>Streptococcus</taxon>
    </lineage>
</organism>
<name>SSB2_STRP6</name>
<proteinExistence type="inferred from homology"/>
<protein>
    <recommendedName>
        <fullName evidence="1">Single-stranded DNA-binding protein 2</fullName>
        <shortName evidence="1">SSB 2</shortName>
    </recommendedName>
</protein>
<comment type="function">
    <text evidence="1">Plays an important role in DNA replication, recombination and repair. Binds to ssDNA and to an array of partner proteins to recruit them to their sites of action during DNA metabolism.</text>
</comment>
<comment type="subunit">
    <text evidence="1">Homotetramer.</text>
</comment>